<proteinExistence type="evidence at transcript level"/>
<gene>
    <name evidence="7" type="primary">ENOD11</name>
    <name evidence="11" type="ordered locus">MTR_3g415670</name>
</gene>
<evidence type="ECO:0000255" key="1"/>
<evidence type="ECO:0000256" key="2">
    <source>
        <dbReference type="SAM" id="MobiDB-lite"/>
    </source>
</evidence>
<evidence type="ECO:0000269" key="3">
    <source>
    </source>
</evidence>
<evidence type="ECO:0000269" key="4">
    <source>
    </source>
</evidence>
<evidence type="ECO:0000269" key="5">
    <source>
    </source>
</evidence>
<evidence type="ECO:0000269" key="6">
    <source>
    </source>
</evidence>
<evidence type="ECO:0000303" key="7">
    <source>
    </source>
</evidence>
<evidence type="ECO:0000305" key="8"/>
<evidence type="ECO:0000305" key="9">
    <source>
    </source>
</evidence>
<evidence type="ECO:0000305" key="10">
    <source>
    </source>
</evidence>
<evidence type="ECO:0000312" key="11">
    <source>
        <dbReference type="EMBL" id="KEH33032.1"/>
    </source>
</evidence>
<keyword id="KW-0134">Cell wall</keyword>
<keyword id="KW-0536">Nodulation</keyword>
<keyword id="KW-1185">Reference proteome</keyword>
<keyword id="KW-0964">Secreted</keyword>
<keyword id="KW-0732">Signal</keyword>
<organism>
    <name type="scientific">Medicago truncatula</name>
    <name type="common">Barrel medic</name>
    <name type="synonym">Medicago tribuloides</name>
    <dbReference type="NCBI Taxonomy" id="3880"/>
    <lineage>
        <taxon>Eukaryota</taxon>
        <taxon>Viridiplantae</taxon>
        <taxon>Streptophyta</taxon>
        <taxon>Embryophyta</taxon>
        <taxon>Tracheophyta</taxon>
        <taxon>Spermatophyta</taxon>
        <taxon>Magnoliopsida</taxon>
        <taxon>eudicotyledons</taxon>
        <taxon>Gunneridae</taxon>
        <taxon>Pentapetalae</taxon>
        <taxon>rosids</taxon>
        <taxon>fabids</taxon>
        <taxon>Fabales</taxon>
        <taxon>Fabaceae</taxon>
        <taxon>Papilionoideae</taxon>
        <taxon>50 kb inversion clade</taxon>
        <taxon>NPAAA clade</taxon>
        <taxon>Hologalegina</taxon>
        <taxon>IRL clade</taxon>
        <taxon>Trifolieae</taxon>
        <taxon>Medicago</taxon>
    </lineage>
</organism>
<comment type="function">
    <text evidence="9 10">Involved in the infection process during the plant-rhizobium interaction (Probable). Involved in actinorhizal root nodulation. Involved in symbiotic association with the nitrogen-fixing actinomycete Frankia spp (Probable).</text>
</comment>
<comment type="subcellular location">
    <subcellularLocation>
        <location evidence="8">Secreted</location>
        <location evidence="8">Cell wall</location>
    </subcellularLocation>
</comment>
<comment type="tissue specificity">
    <text evidence="3">Expressed in cotyledons, leaf vasculature, stomatal guard cells and trichomes. In the embryo, expressed in embryo suspensors, the epidermis and underlying tissues of the cotyledons, hypocotyls, and radicle in maturing embryos, and the outer cell layer of the endosperm.</text>
</comment>
<comment type="induction">
    <text evidence="3 4 5 6">Induced during preinfection and infection stages of nodulation in root and nodule tissues. Induced during root colonization by endomycorrhizal fungi in inner cortical cells containing recently formed arbuscules (PubMed:11386369, PubMed:16478046). Induced by Nod factors (PubMed:15489277). Induced during actinorhizal root nodulation following symbiotic association with the nitrogen-fixing actinomycete Frankia spp (PubMed:20459313).</text>
</comment>
<comment type="similarity">
    <text evidence="8">Belongs to the plant proline-rich protein superfamily.</text>
</comment>
<name>NO11_MEDTR</name>
<reference key="1">
    <citation type="journal article" date="2005" name="Mol. Plant Microbe Interact.">
        <title>MtENOD11 gene activation during rhizobial infection and mycorrhizal arbuscule development requires a common AT-rich-containing regulatory sequence.</title>
        <authorList>
            <person name="Boisson-Dernier A."/>
            <person name="Andriankaja A."/>
            <person name="Chabaud M."/>
            <person name="Niebel A."/>
            <person name="Journet E.P."/>
            <person name="Barker D.G."/>
            <person name="de Carvalho-Niebel F."/>
        </authorList>
    </citation>
    <scope>NUCLEOTIDE SEQUENCE [GENOMIC DNA]</scope>
    <scope>FUNCTION</scope>
    <scope>INDUCTION</scope>
    <source>
        <strain>cv. Jemalong</strain>
    </source>
</reference>
<reference key="2">
    <citation type="submission" date="2012-05" db="EMBL/GenBank/DDBJ databases">
        <title>Medicago truncatula clone JCVI-FLMt-1C24 unknown mRNA.</title>
        <authorList>
            <person name="Krishnakumar V."/>
            <person name="Cheung F."/>
            <person name="Xiao Y."/>
            <person name="Chan A."/>
            <person name="Moskal W.A."/>
            <person name="Town C.D."/>
        </authorList>
    </citation>
    <scope>NUCLEOTIDE SEQUENCE [MRNA]</scope>
</reference>
<reference key="3">
    <citation type="journal article" date="2011" name="Nature">
        <title>The Medicago genome provides insight into the evolution of rhizobial symbioses.</title>
        <authorList>
            <person name="Young N.D."/>
            <person name="Debelle F."/>
            <person name="Oldroyd G.E.D."/>
            <person name="Geurts R."/>
            <person name="Cannon S.B."/>
            <person name="Udvardi M.K."/>
            <person name="Benedito V.A."/>
            <person name="Mayer K.F.X."/>
            <person name="Gouzy J."/>
            <person name="Schoof H."/>
            <person name="Van de Peer Y."/>
            <person name="Proost S."/>
            <person name="Cook D.R."/>
            <person name="Meyers B.C."/>
            <person name="Spannagl M."/>
            <person name="Cheung F."/>
            <person name="De Mita S."/>
            <person name="Krishnakumar V."/>
            <person name="Gundlach H."/>
            <person name="Zhou S."/>
            <person name="Mudge J."/>
            <person name="Bharti A.K."/>
            <person name="Murray J.D."/>
            <person name="Naoumkina M.A."/>
            <person name="Rosen B."/>
            <person name="Silverstein K.A.T."/>
            <person name="Tang H."/>
            <person name="Rombauts S."/>
            <person name="Zhao P.X."/>
            <person name="Zhou P."/>
            <person name="Barbe V."/>
            <person name="Bardou P."/>
            <person name="Bechner M."/>
            <person name="Bellec A."/>
            <person name="Berger A."/>
            <person name="Berges H."/>
            <person name="Bidwell S."/>
            <person name="Bisseling T."/>
            <person name="Choisne N."/>
            <person name="Couloux A."/>
            <person name="Denny R."/>
            <person name="Deshpande S."/>
            <person name="Dai X."/>
            <person name="Doyle J.J."/>
            <person name="Dudez A.-M."/>
            <person name="Farmer A.D."/>
            <person name="Fouteau S."/>
            <person name="Franken C."/>
            <person name="Gibelin C."/>
            <person name="Gish J."/>
            <person name="Goldstein S."/>
            <person name="Gonzalez A.J."/>
            <person name="Green P.J."/>
            <person name="Hallab A."/>
            <person name="Hartog M."/>
            <person name="Hua A."/>
            <person name="Humphray S.J."/>
            <person name="Jeong D.-H."/>
            <person name="Jing Y."/>
            <person name="Jocker A."/>
            <person name="Kenton S.M."/>
            <person name="Kim D.-J."/>
            <person name="Klee K."/>
            <person name="Lai H."/>
            <person name="Lang C."/>
            <person name="Lin S."/>
            <person name="Macmil S.L."/>
            <person name="Magdelenat G."/>
            <person name="Matthews L."/>
            <person name="McCorrison J."/>
            <person name="Monaghan E.L."/>
            <person name="Mun J.-H."/>
            <person name="Najar F.Z."/>
            <person name="Nicholson C."/>
            <person name="Noirot C."/>
            <person name="O'Bleness M."/>
            <person name="Paule C.R."/>
            <person name="Poulain J."/>
            <person name="Prion F."/>
            <person name="Qin B."/>
            <person name="Qu C."/>
            <person name="Retzel E.F."/>
            <person name="Riddle C."/>
            <person name="Sallet E."/>
            <person name="Samain S."/>
            <person name="Samson N."/>
            <person name="Sanders I."/>
            <person name="Saurat O."/>
            <person name="Scarpelli C."/>
            <person name="Schiex T."/>
            <person name="Segurens B."/>
            <person name="Severin A.J."/>
            <person name="Sherrier D.J."/>
            <person name="Shi R."/>
            <person name="Sims S."/>
            <person name="Singer S.R."/>
            <person name="Sinharoy S."/>
            <person name="Sterck L."/>
            <person name="Viollet A."/>
            <person name="Wang B.-B."/>
            <person name="Wang K."/>
            <person name="Wang M."/>
            <person name="Wang X."/>
            <person name="Warfsmann J."/>
            <person name="Weissenbach J."/>
            <person name="White D.D."/>
            <person name="White J.D."/>
            <person name="Wiley G.B."/>
            <person name="Wincker P."/>
            <person name="Xing Y."/>
            <person name="Yang L."/>
            <person name="Yao Z."/>
            <person name="Ying F."/>
            <person name="Zhai J."/>
            <person name="Zhou L."/>
            <person name="Zuber A."/>
            <person name="Denarie J."/>
            <person name="Dixon R.A."/>
            <person name="May G.D."/>
            <person name="Schwartz D.C."/>
            <person name="Rogers J."/>
            <person name="Quetier F."/>
            <person name="Town C.D."/>
            <person name="Roe B.A."/>
        </authorList>
    </citation>
    <scope>NUCLEOTIDE SEQUENCE [LARGE SCALE GENOMIC DNA]</scope>
    <source>
        <strain>cv. Jemalong A17</strain>
    </source>
</reference>
<reference key="4">
    <citation type="journal article" date="2014" name="BMC Genomics">
        <title>An improved genome release (version Mt4.0) for the model legume Medicago truncatula.</title>
        <authorList>
            <person name="Tang H."/>
            <person name="Krishnakumar V."/>
            <person name="Bidwell S."/>
            <person name="Rosen B."/>
            <person name="Chan A."/>
            <person name="Zhou S."/>
            <person name="Gentzbittel L."/>
            <person name="Childs K.L."/>
            <person name="Yandell M."/>
            <person name="Gundlach H."/>
            <person name="Mayer K.F."/>
            <person name="Schwartz D.C."/>
            <person name="Town C.D."/>
        </authorList>
    </citation>
    <scope>GENOME REANNOTATION</scope>
    <source>
        <strain>cv. Jemalong A17</strain>
    </source>
</reference>
<reference key="5">
    <citation type="journal article" date="2001" name="Mol. Plant Microbe Interact.">
        <title>Medicago truncatula ENOD11: a novel RPRP-encoding early nodulin gene expressed during mycorrhization in arbuscule-containing cells.</title>
        <authorList>
            <person name="Journet E.P."/>
            <person name="El-Gachtouli N."/>
            <person name="Vernoud V."/>
            <person name="de Billy F."/>
            <person name="Pichon M."/>
            <person name="Dedieu A."/>
            <person name="Arnould C."/>
            <person name="Morandi D."/>
            <person name="Barker D.G."/>
            <person name="Gianinazzi-Pearson V."/>
        </authorList>
    </citation>
    <scope>TISSUE SPECIFICITY</scope>
    <scope>INDUCTION</scope>
</reference>
<reference key="6">
    <citation type="journal article" date="2004" name="Plant Physiol.">
        <title>Pharmacological evidence that multiple phospholipid signaling pathways link Rhizobium nodulation factor perception in Medicago truncatula root hairs to intracellular responses, including Ca2+ spiking and specific ENOD gene expression.</title>
        <authorList>
            <person name="Charron D."/>
            <person name="Pingret J.L."/>
            <person name="Chabaud M."/>
            <person name="Journet E.P."/>
            <person name="Barker D.G."/>
        </authorList>
    </citation>
    <scope>INDUCTION BY NOD FACTORS</scope>
</reference>
<reference key="7">
    <citation type="journal article" date="2010" name="Mol. Plant Microbe Interact.">
        <title>Infection-specific activation of the Medicago truncatula Enod11 early nodulin gene promoter during actinorhizal root nodulation.</title>
        <authorList>
            <person name="Svistoonoff S."/>
            <person name="Sy M.O."/>
            <person name="Diagne N."/>
            <person name="Barker D.G."/>
            <person name="Bogusz D."/>
            <person name="Franche C."/>
        </authorList>
    </citation>
    <scope>FUNCTION</scope>
    <scope>INDUCTION</scope>
</reference>
<protein>
    <recommendedName>
        <fullName evidence="8">Early nodulin-11</fullName>
        <shortName evidence="7">MtENOD11</shortName>
    </recommendedName>
    <alternativeName>
        <fullName evidence="8">Cell wall repetitive proline-rich protein ENOD11</fullName>
    </alternativeName>
</protein>
<feature type="signal peptide" evidence="1">
    <location>
        <begin position="1"/>
        <end position="25"/>
    </location>
</feature>
<feature type="chain" id="PRO_5014589393" description="Early nodulin-11">
    <location>
        <begin position="26"/>
        <end position="174"/>
    </location>
</feature>
<feature type="region of interest" description="Disordered" evidence="2">
    <location>
        <begin position="28"/>
        <end position="174"/>
    </location>
</feature>
<feature type="compositionally biased region" description="Pro residues" evidence="2">
    <location>
        <begin position="53"/>
        <end position="65"/>
    </location>
</feature>
<feature type="compositionally biased region" description="Low complexity" evidence="2">
    <location>
        <begin position="70"/>
        <end position="83"/>
    </location>
</feature>
<feature type="compositionally biased region" description="Basic residues" evidence="2">
    <location>
        <begin position="122"/>
        <end position="132"/>
    </location>
</feature>
<feature type="compositionally biased region" description="Pro residues" evidence="2">
    <location>
        <begin position="134"/>
        <end position="150"/>
    </location>
</feature>
<feature type="compositionally biased region" description="Pro residues" evidence="2">
    <location>
        <begin position="159"/>
        <end position="174"/>
    </location>
</feature>
<accession>Q9FEW3</accession>
<dbReference type="EMBL" id="AJ297721">
    <property type="protein sequence ID" value="CAC20726.1"/>
    <property type="molecule type" value="Genomic_DNA"/>
</dbReference>
<dbReference type="EMBL" id="BT135504">
    <property type="protein sequence ID" value="AFK35299.1"/>
    <property type="molecule type" value="mRNA"/>
</dbReference>
<dbReference type="EMBL" id="CM001219">
    <property type="protein sequence ID" value="KEH33032.1"/>
    <property type="molecule type" value="Genomic_DNA"/>
</dbReference>
<dbReference type="RefSeq" id="NP_001363147.1">
    <property type="nucleotide sequence ID" value="NM_001376218.1"/>
</dbReference>
<dbReference type="RefSeq" id="XP_013459223.1">
    <property type="nucleotide sequence ID" value="XM_013603769.1"/>
</dbReference>
<dbReference type="STRING" id="3880.Q9FEW3"/>
<dbReference type="GeneID" id="25490362"/>
<dbReference type="HOGENOM" id="CLU_1542342_0_0_1"/>
<dbReference type="Proteomes" id="UP000002051">
    <property type="component" value="Chromosome 3"/>
</dbReference>
<dbReference type="GO" id="GO:0005576">
    <property type="term" value="C:extracellular region"/>
    <property type="evidence" value="ECO:0007669"/>
    <property type="project" value="UniProtKB-KW"/>
</dbReference>
<dbReference type="GO" id="GO:0009877">
    <property type="term" value="P:nodulation"/>
    <property type="evidence" value="ECO:0007669"/>
    <property type="project" value="UniProtKB-KW"/>
</dbReference>
<dbReference type="InterPro" id="IPR051308">
    <property type="entry name" value="Proline-rich_CW_protein"/>
</dbReference>
<dbReference type="PANTHER" id="PTHR34629">
    <property type="entry name" value="PROLINE-RICH EXTENSIN-LIKE PROTEIN EPR1"/>
    <property type="match status" value="1"/>
</dbReference>
<dbReference type="PANTHER" id="PTHR34629:SF4">
    <property type="entry name" value="REPETITIVE PROLINE-RICH CELL WALL PROTEIN 3"/>
    <property type="match status" value="1"/>
</dbReference>
<dbReference type="PRINTS" id="PR01217">
    <property type="entry name" value="PRICHEXTENSN"/>
</dbReference>
<sequence>MASFFLYSLGLVFLSALTLVPLGLADKSPSHNMPPNPIYTTPIHKNPTNTPVYNPPIYKPPPTYKPPIKKQPINKSPNKKPLLLKPPLPKPPHKEPPSRKRPINTPPDKKPPLLKPPFPKPPQKKPPSRKRPINTPPNKKPPLPKPPVNKPPHKKPSNKRPPPYGNQPPPSIHF</sequence>